<comment type="function">
    <molecule>Venom peptide 7.1</molecule>
    <text evidence="2">Has a weak inhibitory effect on voltage-gated sodium channel Nav1.5/SCN5A. Inhibits acetylcholine esterase in vitro. Increases interleukin-6 secretion from macrophages in vitro. Has no antifungal, antiviral or cytotoxic activity.</text>
</comment>
<comment type="function">
    <molecule>Venom peptide 7.2</molecule>
    <text evidence="2">Strongly inhibits acetylcholine esterase in vitro. Increases Il-6 secretion from macrophages in vitro. Has no antifungal, antiviral or cytotoxic activity.</text>
</comment>
<comment type="subcellular location">
    <subcellularLocation>
        <location evidence="1 2">Secreted</location>
    </subcellularLocation>
</comment>
<comment type="tissue specificity">
    <text evidence="5">Expressed by the venom gland.</text>
</comment>
<comment type="miscellaneous">
    <text evidence="2">Negative results: has no effect on voltage-gated potassium channels. Has no effect on voltage-gated sodium channels Nav1.2/SCN2A, Nav1.3/SCN3A, Nav1.4/SCN4A and a sodium channel from B.germanica.</text>
</comment>
<comment type="similarity">
    <text evidence="5">Belongs to the non-disulfide-bridged peptide (NDBP) superfamily. Short antimicrobial peptide (group 4) family.</text>
</comment>
<name>NDB4V_TITSE</name>
<organism>
    <name type="scientific">Tityus serrulatus</name>
    <name type="common">Brazilian scorpion</name>
    <dbReference type="NCBI Taxonomy" id="6887"/>
    <lineage>
        <taxon>Eukaryota</taxon>
        <taxon>Metazoa</taxon>
        <taxon>Ecdysozoa</taxon>
        <taxon>Arthropoda</taxon>
        <taxon>Chelicerata</taxon>
        <taxon>Arachnida</taxon>
        <taxon>Scorpiones</taxon>
        <taxon>Buthida</taxon>
        <taxon>Buthoidea</taxon>
        <taxon>Buthidae</taxon>
        <taxon>Tityus</taxon>
    </lineage>
</organism>
<dbReference type="GO" id="GO:0005576">
    <property type="term" value="C:extracellular region"/>
    <property type="evidence" value="ECO:0007669"/>
    <property type="project" value="UniProtKB-SubCell"/>
</dbReference>
<dbReference type="GO" id="GO:0017080">
    <property type="term" value="F:sodium channel regulator activity"/>
    <property type="evidence" value="ECO:0007669"/>
    <property type="project" value="UniProtKB-KW"/>
</dbReference>
<dbReference type="GO" id="GO:0090729">
    <property type="term" value="F:toxin activity"/>
    <property type="evidence" value="ECO:0007669"/>
    <property type="project" value="UniProtKB-KW"/>
</dbReference>
<reference key="1">
    <citation type="journal article" date="2008" name="Toxicon">
        <title>Tityus serrulatus venom peptidomics: assessing venom peptide diversity.</title>
        <authorList>
            <person name="Rates B."/>
            <person name="Ferraz K.K."/>
            <person name="Borges M.H."/>
            <person name="Richardson M."/>
            <person name="De Lima M.E."/>
            <person name="Pimenta A.M."/>
        </authorList>
    </citation>
    <scope>PROTEIN SEQUENCE</scope>
    <scope>SUBCELLULAR LOCATION</scope>
    <source>
        <tissue evidence="1">Venom</tissue>
    </source>
</reference>
<reference key="2">
    <citation type="journal article" date="2016" name="Peptides">
        <title>Non-disulfide-bridged peptides from Tityus serrulatus venom: Evidence for proline-free ACE-inhibitors.</title>
        <authorList>
            <person name="Pucca M.B."/>
            <person name="Cerni F.A."/>
            <person name="Pinheiro-Junior E.L."/>
            <person name="Zoccal K.F."/>
            <person name="Bordon K.C."/>
            <person name="Amorim F.G."/>
            <person name="Peigneur S."/>
            <person name="Vriens K."/>
            <person name="Thevissen K."/>
            <person name="Cammue B.P."/>
            <person name="Junior R.B."/>
            <person name="Arruda E."/>
            <person name="Faccioli L.H."/>
            <person name="Tytgat J."/>
            <person name="Arantes E.C."/>
        </authorList>
    </citation>
    <scope>PROTEIN SEQUENCE</scope>
    <scope>FUNCTION</scope>
    <scope>SUBCELLULAR LOCATION</scope>
    <source>
        <tissue evidence="4">Venom</tissue>
    </source>
</reference>
<keyword id="KW-0903">Direct protein sequencing</keyword>
<keyword id="KW-0872">Ion channel impairing toxin</keyword>
<keyword id="KW-0964">Secreted</keyword>
<keyword id="KW-0800">Toxin</keyword>
<keyword id="KW-0738">Voltage-gated sodium channel impairing toxin</keyword>
<proteinExistence type="evidence at protein level"/>
<sequence>RLRSKGKK</sequence>
<accession>P86828</accession>
<accession>C0HJT3</accession>
<evidence type="ECO:0000269" key="1">
    <source>
    </source>
</evidence>
<evidence type="ECO:0000269" key="2">
    <source>
    </source>
</evidence>
<evidence type="ECO:0000303" key="3">
    <source>
    </source>
</evidence>
<evidence type="ECO:0000303" key="4">
    <source>
    </source>
</evidence>
<evidence type="ECO:0000305" key="5"/>
<feature type="peptide" id="PRO_0000401156" description="Venom peptide 7.1" evidence="1">
    <location>
        <begin position="1"/>
        <end position="8"/>
    </location>
</feature>
<feature type="peptide" id="PRO_0000438307" description="Venom peptide 7.2" evidence="2">
    <location>
        <begin position="1"/>
        <end position="6"/>
    </location>
</feature>
<feature type="unsure residue" description="K or Q" evidence="1">
    <location>
        <position position="7"/>
    </location>
</feature>
<feature type="unsure residue" description="K or Q" evidence="1">
    <location>
        <position position="8"/>
    </location>
</feature>
<protein>
    <recommendedName>
        <fullName evidence="4">Venom peptide 7.1</fullName>
    </recommendedName>
    <alternativeName>
        <fullName evidence="3">Venom peptide 7</fullName>
    </alternativeName>
    <component>
        <recommendedName>
            <fullName evidence="4">Venom peptide 7.2</fullName>
        </recommendedName>
    </component>
</protein>